<protein>
    <recommendedName>
        <fullName evidence="1">Protein ApaG</fullName>
    </recommendedName>
</protein>
<dbReference type="EMBL" id="CP000103">
    <property type="protein sequence ID" value="ABB75661.1"/>
    <property type="molecule type" value="Genomic_DNA"/>
</dbReference>
<dbReference type="RefSeq" id="WP_011381662.1">
    <property type="nucleotide sequence ID" value="NC_007614.1"/>
</dbReference>
<dbReference type="SMR" id="Q2Y6G0"/>
<dbReference type="STRING" id="323848.Nmul_A2372"/>
<dbReference type="KEGG" id="nmu:Nmul_A2372"/>
<dbReference type="eggNOG" id="COG2967">
    <property type="taxonomic scope" value="Bacteria"/>
</dbReference>
<dbReference type="HOGENOM" id="CLU_128074_0_0_4"/>
<dbReference type="OrthoDB" id="9795226at2"/>
<dbReference type="Proteomes" id="UP000002718">
    <property type="component" value="Chromosome"/>
</dbReference>
<dbReference type="GO" id="GO:0070987">
    <property type="term" value="P:error-free translesion synthesis"/>
    <property type="evidence" value="ECO:0007669"/>
    <property type="project" value="TreeGrafter"/>
</dbReference>
<dbReference type="Gene3D" id="2.60.40.1470">
    <property type="entry name" value="ApaG domain"/>
    <property type="match status" value="1"/>
</dbReference>
<dbReference type="HAMAP" id="MF_00791">
    <property type="entry name" value="ApaG"/>
    <property type="match status" value="1"/>
</dbReference>
<dbReference type="InterPro" id="IPR007474">
    <property type="entry name" value="ApaG_domain"/>
</dbReference>
<dbReference type="InterPro" id="IPR036767">
    <property type="entry name" value="ApaG_sf"/>
</dbReference>
<dbReference type="InterPro" id="IPR023065">
    <property type="entry name" value="Uncharacterised_ApaG"/>
</dbReference>
<dbReference type="NCBIfam" id="NF003967">
    <property type="entry name" value="PRK05461.1"/>
    <property type="match status" value="1"/>
</dbReference>
<dbReference type="PANTHER" id="PTHR14289">
    <property type="entry name" value="F-BOX ONLY PROTEIN 3"/>
    <property type="match status" value="1"/>
</dbReference>
<dbReference type="PANTHER" id="PTHR14289:SF16">
    <property type="entry name" value="POLYMERASE DELTA-INTERACTING PROTEIN 2"/>
    <property type="match status" value="1"/>
</dbReference>
<dbReference type="Pfam" id="PF04379">
    <property type="entry name" value="DUF525"/>
    <property type="match status" value="1"/>
</dbReference>
<dbReference type="SUPFAM" id="SSF110069">
    <property type="entry name" value="ApaG-like"/>
    <property type="match status" value="1"/>
</dbReference>
<dbReference type="PROSITE" id="PS51087">
    <property type="entry name" value="APAG"/>
    <property type="match status" value="1"/>
</dbReference>
<reference key="1">
    <citation type="submission" date="2005-08" db="EMBL/GenBank/DDBJ databases">
        <title>Complete sequence of chromosome 1 of Nitrosospira multiformis ATCC 25196.</title>
        <authorList>
            <person name="Copeland A."/>
            <person name="Lucas S."/>
            <person name="Lapidus A."/>
            <person name="Barry K."/>
            <person name="Detter J.C."/>
            <person name="Glavina T."/>
            <person name="Hammon N."/>
            <person name="Israni S."/>
            <person name="Pitluck S."/>
            <person name="Chain P."/>
            <person name="Malfatti S."/>
            <person name="Shin M."/>
            <person name="Vergez L."/>
            <person name="Schmutz J."/>
            <person name="Larimer F."/>
            <person name="Land M."/>
            <person name="Hauser L."/>
            <person name="Kyrpides N."/>
            <person name="Lykidis A."/>
            <person name="Richardson P."/>
        </authorList>
    </citation>
    <scope>NUCLEOTIDE SEQUENCE [LARGE SCALE GENOMIC DNA]</scope>
    <source>
        <strain>ATCC 25196 / NCIMB 11849 / C 71</strain>
    </source>
</reference>
<feature type="chain" id="PRO_1000083628" description="Protein ApaG">
    <location>
        <begin position="1"/>
        <end position="127"/>
    </location>
</feature>
<feature type="domain" description="ApaG" evidence="1">
    <location>
        <begin position="3"/>
        <end position="127"/>
    </location>
</feature>
<gene>
    <name evidence="1" type="primary">apaG</name>
    <name type="ordered locus">Nmul_A2372</name>
</gene>
<evidence type="ECO:0000255" key="1">
    <source>
        <dbReference type="HAMAP-Rule" id="MF_00791"/>
    </source>
</evidence>
<proteinExistence type="inferred from homology"/>
<keyword id="KW-1185">Reference proteome</keyword>
<name>APAG_NITMU</name>
<accession>Q2Y6G0</accession>
<organism>
    <name type="scientific">Nitrosospira multiformis (strain ATCC 25196 / NCIMB 11849 / C 71)</name>
    <dbReference type="NCBI Taxonomy" id="323848"/>
    <lineage>
        <taxon>Bacteria</taxon>
        <taxon>Pseudomonadati</taxon>
        <taxon>Pseudomonadota</taxon>
        <taxon>Betaproteobacteria</taxon>
        <taxon>Nitrosomonadales</taxon>
        <taxon>Nitrosomonadaceae</taxon>
        <taxon>Nitrosospira</taxon>
    </lineage>
</organism>
<sequence length="127" mass="13804">MAEGKKYEIAVKVHTTYLPEQSDEALDRYVFAYTIVLSNTGTVTAQLISRHWVIADGSGGVQEVRGLGVVGEQPLLKPGDTYEYTSGTAISTPVGSMKGSYQMVAEDGLRFDAPIPEFILSVPRILH</sequence>